<evidence type="ECO:0000255" key="1">
    <source>
        <dbReference type="HAMAP-Rule" id="MF_00184"/>
    </source>
</evidence>
<evidence type="ECO:0000255" key="2">
    <source>
        <dbReference type="PROSITE-ProRule" id="PRU01228"/>
    </source>
</evidence>
<comment type="function">
    <text evidence="1">Catalyzes the attachment of threonine to tRNA(Thr) in a two-step reaction: L-threonine is first activated by ATP to form Thr-AMP and then transferred to the acceptor end of tRNA(Thr).</text>
</comment>
<comment type="catalytic activity">
    <reaction evidence="1">
        <text>tRNA(Thr) + L-threonine + ATP = L-threonyl-tRNA(Thr) + AMP + diphosphate + H(+)</text>
        <dbReference type="Rhea" id="RHEA:24624"/>
        <dbReference type="Rhea" id="RHEA-COMP:9670"/>
        <dbReference type="Rhea" id="RHEA-COMP:9704"/>
        <dbReference type="ChEBI" id="CHEBI:15378"/>
        <dbReference type="ChEBI" id="CHEBI:30616"/>
        <dbReference type="ChEBI" id="CHEBI:33019"/>
        <dbReference type="ChEBI" id="CHEBI:57926"/>
        <dbReference type="ChEBI" id="CHEBI:78442"/>
        <dbReference type="ChEBI" id="CHEBI:78534"/>
        <dbReference type="ChEBI" id="CHEBI:456215"/>
        <dbReference type="EC" id="6.1.1.3"/>
    </reaction>
</comment>
<comment type="cofactor">
    <cofactor evidence="1">
        <name>Zn(2+)</name>
        <dbReference type="ChEBI" id="CHEBI:29105"/>
    </cofactor>
    <text evidence="1">Binds 1 zinc ion per subunit.</text>
</comment>
<comment type="subunit">
    <text evidence="1">Homodimer.</text>
</comment>
<comment type="subcellular location">
    <subcellularLocation>
        <location evidence="1">Cytoplasm</location>
    </subcellularLocation>
</comment>
<comment type="similarity">
    <text evidence="1">Belongs to the class-II aminoacyl-tRNA synthetase family.</text>
</comment>
<keyword id="KW-0030">Aminoacyl-tRNA synthetase</keyword>
<keyword id="KW-0067">ATP-binding</keyword>
<keyword id="KW-0963">Cytoplasm</keyword>
<keyword id="KW-0436">Ligase</keyword>
<keyword id="KW-0479">Metal-binding</keyword>
<keyword id="KW-0547">Nucleotide-binding</keyword>
<keyword id="KW-0648">Protein biosynthesis</keyword>
<keyword id="KW-0694">RNA-binding</keyword>
<keyword id="KW-0820">tRNA-binding</keyword>
<keyword id="KW-0862">Zinc</keyword>
<sequence length="640" mass="72809">MSSVTVTLPDGSTLEVASGATVEDVAHEIGPGLGRDTVAGKIDHELVAKEEPISEDCEIEIVTDQSDEYLDVLRHTAAHVLAQAIRRHHPDAKLTIGPYTDEGFYYDIANVELDADDLDEIQAEAASIIDDDLDVERVEYDRADAREHYADNEFKREILDAEAAGDGPVSFYTQGDFEDLCKGPHVDSTGEIGGFEVLETSAAYWRGDEERETLTRVYGTAFPTESDLQEYLARREEAKERDHRKLGREMDLFSIPDVTGPGLPLYHPNGKTVLRELSEYVRGLNSEMGYDEVETPHLFRTELWKQSGHYDNYVDDMFLLDVNDEEYGLKPMNCPGHATIFNEGSWSYRDLPVRYFEDGKVYRKEQRGELSGLSRVWAFTIDDGHVFARADQIEAEVRRLMDTITEVLDTFDLDYEVALATRPEKSVGSDDIWEQSERQLREVLDQQGVDYDVEPGDGAFYGPKIDFGFEDALGRSWDGPTVQLDFNMPDRFDLEYTGSDNDAHQPVMIHRALYGSYERFFMVLIEHYNGRFPTWLAPEQVRILPVTDDNLGYAHRVKNELGDYRVEVEDRDWTVGKKIQQAHDDNVPYMLVVGDDEEDADAVSVRDRQEREGKGVDLAEFRAHLDSEVDGKRTEPDFLD</sequence>
<protein>
    <recommendedName>
        <fullName evidence="1">Threonine--tRNA ligase</fullName>
        <ecNumber evidence="1">6.1.1.3</ecNumber>
    </recommendedName>
    <alternativeName>
        <fullName evidence="1">Threonyl-tRNA synthetase</fullName>
        <shortName evidence="1">ThrRS</shortName>
    </alternativeName>
</protein>
<feature type="chain" id="PRO_1000098576" description="Threonine--tRNA ligase">
    <location>
        <begin position="1"/>
        <end position="640"/>
    </location>
</feature>
<feature type="domain" description="TGS" evidence="2">
    <location>
        <begin position="1"/>
        <end position="63"/>
    </location>
</feature>
<feature type="region of interest" description="Catalytic" evidence="1">
    <location>
        <begin position="242"/>
        <end position="533"/>
    </location>
</feature>
<feature type="binding site" evidence="1">
    <location>
        <position position="334"/>
    </location>
    <ligand>
        <name>Zn(2+)</name>
        <dbReference type="ChEBI" id="CHEBI:29105"/>
    </ligand>
</feature>
<feature type="binding site" evidence="1">
    <location>
        <position position="385"/>
    </location>
    <ligand>
        <name>Zn(2+)</name>
        <dbReference type="ChEBI" id="CHEBI:29105"/>
    </ligand>
</feature>
<feature type="binding site" evidence="1">
    <location>
        <position position="510"/>
    </location>
    <ligand>
        <name>Zn(2+)</name>
        <dbReference type="ChEBI" id="CHEBI:29105"/>
    </ligand>
</feature>
<reference key="1">
    <citation type="journal article" date="2008" name="Genomics">
        <title>Evolution in the laboratory: the genome of Halobacterium salinarum strain R1 compared to that of strain NRC-1.</title>
        <authorList>
            <person name="Pfeiffer F."/>
            <person name="Schuster S.C."/>
            <person name="Broicher A."/>
            <person name="Falb M."/>
            <person name="Palm P."/>
            <person name="Rodewald K."/>
            <person name="Ruepp A."/>
            <person name="Soppa J."/>
            <person name="Tittor J."/>
            <person name="Oesterhelt D."/>
        </authorList>
    </citation>
    <scope>NUCLEOTIDE SEQUENCE [LARGE SCALE GENOMIC DNA]</scope>
    <source>
        <strain>ATCC 29341 / DSM 671 / R1</strain>
    </source>
</reference>
<dbReference type="EC" id="6.1.1.3" evidence="1"/>
<dbReference type="EMBL" id="AM774415">
    <property type="protein sequence ID" value="CAP14335.1"/>
    <property type="molecule type" value="Genomic_DNA"/>
</dbReference>
<dbReference type="RefSeq" id="WP_012289388.1">
    <property type="nucleotide sequence ID" value="NC_010364.1"/>
</dbReference>
<dbReference type="SMR" id="B0R6G6"/>
<dbReference type="EnsemblBacteria" id="CAP14335">
    <property type="protein sequence ID" value="CAP14335"/>
    <property type="gene ID" value="OE_3580R"/>
</dbReference>
<dbReference type="GeneID" id="68694462"/>
<dbReference type="KEGG" id="hsl:OE_3580R"/>
<dbReference type="HOGENOM" id="CLU_008554_0_1_2"/>
<dbReference type="PhylomeDB" id="B0R6G6"/>
<dbReference type="Proteomes" id="UP000001321">
    <property type="component" value="Chromosome"/>
</dbReference>
<dbReference type="GO" id="GO:0005737">
    <property type="term" value="C:cytoplasm"/>
    <property type="evidence" value="ECO:0007669"/>
    <property type="project" value="UniProtKB-SubCell"/>
</dbReference>
<dbReference type="GO" id="GO:0002161">
    <property type="term" value="F:aminoacyl-tRNA deacylase activity"/>
    <property type="evidence" value="ECO:0007669"/>
    <property type="project" value="UniProtKB-ARBA"/>
</dbReference>
<dbReference type="GO" id="GO:0005524">
    <property type="term" value="F:ATP binding"/>
    <property type="evidence" value="ECO:0007669"/>
    <property type="project" value="UniProtKB-UniRule"/>
</dbReference>
<dbReference type="GO" id="GO:0046872">
    <property type="term" value="F:metal ion binding"/>
    <property type="evidence" value="ECO:0007669"/>
    <property type="project" value="UniProtKB-KW"/>
</dbReference>
<dbReference type="GO" id="GO:0004829">
    <property type="term" value="F:threonine-tRNA ligase activity"/>
    <property type="evidence" value="ECO:0007669"/>
    <property type="project" value="UniProtKB-UniRule"/>
</dbReference>
<dbReference type="GO" id="GO:0000049">
    <property type="term" value="F:tRNA binding"/>
    <property type="evidence" value="ECO:0007669"/>
    <property type="project" value="UniProtKB-KW"/>
</dbReference>
<dbReference type="GO" id="GO:0006435">
    <property type="term" value="P:threonyl-tRNA aminoacylation"/>
    <property type="evidence" value="ECO:0007669"/>
    <property type="project" value="UniProtKB-UniRule"/>
</dbReference>
<dbReference type="CDD" id="cd01667">
    <property type="entry name" value="TGS_ThrRS"/>
    <property type="match status" value="1"/>
</dbReference>
<dbReference type="CDD" id="cd00860">
    <property type="entry name" value="ThrRS_anticodon"/>
    <property type="match status" value="1"/>
</dbReference>
<dbReference type="CDD" id="cd00771">
    <property type="entry name" value="ThrRS_core"/>
    <property type="match status" value="1"/>
</dbReference>
<dbReference type="FunFam" id="3.10.20.30:FF:000005">
    <property type="entry name" value="Threonine--tRNA ligase"/>
    <property type="match status" value="1"/>
</dbReference>
<dbReference type="FunFam" id="3.30.930.10:FF:000002">
    <property type="entry name" value="Threonine--tRNA ligase"/>
    <property type="match status" value="1"/>
</dbReference>
<dbReference type="FunFam" id="3.40.50.800:FF:000001">
    <property type="entry name" value="Threonine--tRNA ligase"/>
    <property type="match status" value="1"/>
</dbReference>
<dbReference type="FunFam" id="3.30.980.10:FF:000005">
    <property type="entry name" value="Threonyl-tRNA synthetase, mitochondrial"/>
    <property type="match status" value="1"/>
</dbReference>
<dbReference type="Gene3D" id="3.10.20.30">
    <property type="match status" value="1"/>
</dbReference>
<dbReference type="Gene3D" id="3.30.54.20">
    <property type="match status" value="1"/>
</dbReference>
<dbReference type="Gene3D" id="3.40.50.800">
    <property type="entry name" value="Anticodon-binding domain"/>
    <property type="match status" value="1"/>
</dbReference>
<dbReference type="Gene3D" id="3.30.930.10">
    <property type="entry name" value="Bira Bifunctional Protein, Domain 2"/>
    <property type="match status" value="1"/>
</dbReference>
<dbReference type="Gene3D" id="3.30.980.10">
    <property type="entry name" value="Threonyl-trna Synthetase, Chain A, domain 2"/>
    <property type="match status" value="1"/>
</dbReference>
<dbReference type="HAMAP" id="MF_00184">
    <property type="entry name" value="Thr_tRNA_synth"/>
    <property type="match status" value="1"/>
</dbReference>
<dbReference type="InterPro" id="IPR002314">
    <property type="entry name" value="aa-tRNA-synt_IIb"/>
</dbReference>
<dbReference type="InterPro" id="IPR006195">
    <property type="entry name" value="aa-tRNA-synth_II"/>
</dbReference>
<dbReference type="InterPro" id="IPR045864">
    <property type="entry name" value="aa-tRNA-synth_II/BPL/LPL"/>
</dbReference>
<dbReference type="InterPro" id="IPR004154">
    <property type="entry name" value="Anticodon-bd"/>
</dbReference>
<dbReference type="InterPro" id="IPR036621">
    <property type="entry name" value="Anticodon-bd_dom_sf"/>
</dbReference>
<dbReference type="InterPro" id="IPR012675">
    <property type="entry name" value="Beta-grasp_dom_sf"/>
</dbReference>
<dbReference type="InterPro" id="IPR004095">
    <property type="entry name" value="TGS"/>
</dbReference>
<dbReference type="InterPro" id="IPR012676">
    <property type="entry name" value="TGS-like"/>
</dbReference>
<dbReference type="InterPro" id="IPR002320">
    <property type="entry name" value="Thr-tRNA-ligase_IIa"/>
</dbReference>
<dbReference type="InterPro" id="IPR018163">
    <property type="entry name" value="Thr/Ala-tRNA-synth_IIc_edit"/>
</dbReference>
<dbReference type="InterPro" id="IPR047246">
    <property type="entry name" value="ThrRS_anticodon"/>
</dbReference>
<dbReference type="InterPro" id="IPR033728">
    <property type="entry name" value="ThrRS_core"/>
</dbReference>
<dbReference type="InterPro" id="IPR012947">
    <property type="entry name" value="tRNA_SAD"/>
</dbReference>
<dbReference type="NCBIfam" id="TIGR00418">
    <property type="entry name" value="thrS"/>
    <property type="match status" value="1"/>
</dbReference>
<dbReference type="PANTHER" id="PTHR11451:SF44">
    <property type="entry name" value="THREONINE--TRNA LIGASE, CHLOROPLASTIC_MITOCHONDRIAL 2"/>
    <property type="match status" value="1"/>
</dbReference>
<dbReference type="PANTHER" id="PTHR11451">
    <property type="entry name" value="THREONINE-TRNA LIGASE"/>
    <property type="match status" value="1"/>
</dbReference>
<dbReference type="Pfam" id="PF03129">
    <property type="entry name" value="HGTP_anticodon"/>
    <property type="match status" value="1"/>
</dbReference>
<dbReference type="Pfam" id="PF02824">
    <property type="entry name" value="TGS"/>
    <property type="match status" value="1"/>
</dbReference>
<dbReference type="Pfam" id="PF00587">
    <property type="entry name" value="tRNA-synt_2b"/>
    <property type="match status" value="1"/>
</dbReference>
<dbReference type="Pfam" id="PF07973">
    <property type="entry name" value="tRNA_SAD"/>
    <property type="match status" value="1"/>
</dbReference>
<dbReference type="PRINTS" id="PR01047">
    <property type="entry name" value="TRNASYNTHTHR"/>
</dbReference>
<dbReference type="SMART" id="SM00863">
    <property type="entry name" value="tRNA_SAD"/>
    <property type="match status" value="1"/>
</dbReference>
<dbReference type="SUPFAM" id="SSF52954">
    <property type="entry name" value="Class II aaRS ABD-related"/>
    <property type="match status" value="1"/>
</dbReference>
<dbReference type="SUPFAM" id="SSF55681">
    <property type="entry name" value="Class II aaRS and biotin synthetases"/>
    <property type="match status" value="1"/>
</dbReference>
<dbReference type="SUPFAM" id="SSF81271">
    <property type="entry name" value="TGS-like"/>
    <property type="match status" value="1"/>
</dbReference>
<dbReference type="SUPFAM" id="SSF55186">
    <property type="entry name" value="ThrRS/AlaRS common domain"/>
    <property type="match status" value="1"/>
</dbReference>
<dbReference type="PROSITE" id="PS50862">
    <property type="entry name" value="AA_TRNA_LIGASE_II"/>
    <property type="match status" value="1"/>
</dbReference>
<dbReference type="PROSITE" id="PS51880">
    <property type="entry name" value="TGS"/>
    <property type="match status" value="1"/>
</dbReference>
<gene>
    <name evidence="1" type="primary">thrS</name>
    <name type="ordered locus">OE_3580R</name>
</gene>
<accession>B0R6G6</accession>
<name>SYT_HALS3</name>
<organism>
    <name type="scientific">Halobacterium salinarum (strain ATCC 29341 / DSM 671 / R1)</name>
    <dbReference type="NCBI Taxonomy" id="478009"/>
    <lineage>
        <taxon>Archaea</taxon>
        <taxon>Methanobacteriati</taxon>
        <taxon>Methanobacteriota</taxon>
        <taxon>Stenosarchaea group</taxon>
        <taxon>Halobacteria</taxon>
        <taxon>Halobacteriales</taxon>
        <taxon>Halobacteriaceae</taxon>
        <taxon>Halobacterium</taxon>
        <taxon>Halobacterium salinarum NRC-34001</taxon>
    </lineage>
</organism>
<proteinExistence type="inferred from homology"/>